<proteinExistence type="evidence at protein level"/>
<dbReference type="EMBL" id="AC112671">
    <property type="status" value="NOT_ANNOTATED_CDS"/>
    <property type="molecule type" value="Genomic_DNA"/>
</dbReference>
<dbReference type="EMBL" id="AC124362">
    <property type="status" value="NOT_ANNOTATED_CDS"/>
    <property type="molecule type" value="Genomic_DNA"/>
</dbReference>
<dbReference type="EMBL" id="AC140345">
    <property type="status" value="NOT_ANNOTATED_CDS"/>
    <property type="molecule type" value="Genomic_DNA"/>
</dbReference>
<dbReference type="EMBL" id="AC154788">
    <property type="status" value="NOT_ANNOTATED_CDS"/>
    <property type="molecule type" value="Genomic_DNA"/>
</dbReference>
<dbReference type="EMBL" id="AC161266">
    <property type="status" value="NOT_ANNOTATED_CDS"/>
    <property type="molecule type" value="Genomic_DNA"/>
</dbReference>
<dbReference type="EMBL" id="CT009761">
    <property type="status" value="NOT_ANNOTATED_CDS"/>
    <property type="molecule type" value="Genomic_DNA"/>
</dbReference>
<dbReference type="CCDS" id="CCDS26656.1"/>
<dbReference type="RefSeq" id="NP_084450.3">
    <property type="nucleotide sequence ID" value="NM_030174.3"/>
</dbReference>
<dbReference type="RefSeq" id="XP_017171131.1">
    <property type="nucleotide sequence ID" value="XM_017315642.1"/>
</dbReference>
<dbReference type="SMR" id="E9PV86"/>
<dbReference type="FunCoup" id="E9PV86">
    <property type="interactions" value="534"/>
</dbReference>
<dbReference type="STRING" id="10090.ENSMUSP00000105212"/>
<dbReference type="GlyGen" id="E9PV86">
    <property type="glycosylation" value="2 sites"/>
</dbReference>
<dbReference type="iPTMnet" id="E9PV86"/>
<dbReference type="PhosphoSitePlus" id="E9PV86"/>
<dbReference type="PaxDb" id="10090-ENSMUSP00000118958"/>
<dbReference type="PeptideAtlas" id="E9PV86"/>
<dbReference type="ProteomicsDB" id="252753"/>
<dbReference type="Antibodypedia" id="2751">
    <property type="antibodies" value="60 antibodies from 12 providers"/>
</dbReference>
<dbReference type="DNASU" id="78771"/>
<dbReference type="Ensembl" id="ENSMUST00000125209.9">
    <property type="protein sequence ID" value="ENSMUSP00000118958.2"/>
    <property type="gene ID" value="ENSMUSG00000021596.18"/>
</dbReference>
<dbReference type="GeneID" id="78771"/>
<dbReference type="AGR" id="MGI:1926021"/>
<dbReference type="MGI" id="MGI:1926021">
    <property type="gene designation" value="Mctp1"/>
</dbReference>
<dbReference type="VEuPathDB" id="HostDB:ENSMUSG00000021596"/>
<dbReference type="eggNOG" id="KOG1030">
    <property type="taxonomic scope" value="Eukaryota"/>
</dbReference>
<dbReference type="GeneTree" id="ENSGT00940000156031"/>
<dbReference type="InParanoid" id="E9PV86"/>
<dbReference type="OrthoDB" id="5973539at2759"/>
<dbReference type="PhylomeDB" id="E9PV86"/>
<dbReference type="TreeFam" id="TF323373"/>
<dbReference type="BioGRID-ORCS" id="78771">
    <property type="hits" value="3 hits in 76 CRISPR screens"/>
</dbReference>
<dbReference type="ChiTaRS" id="Mctp1">
    <property type="organism name" value="mouse"/>
</dbReference>
<dbReference type="PRO" id="PR:E9PV86"/>
<dbReference type="Proteomes" id="UP000000589">
    <property type="component" value="Chromosome 13"/>
</dbReference>
<dbReference type="RNAct" id="E9PV86">
    <property type="molecule type" value="protein"/>
</dbReference>
<dbReference type="Bgee" id="ENSMUSG00000021596">
    <property type="expression patterns" value="Expressed in granulocyte and 104 other cell types or tissues"/>
</dbReference>
<dbReference type="ExpressionAtlas" id="E9PV86">
    <property type="expression patterns" value="baseline and differential"/>
</dbReference>
<dbReference type="GO" id="GO:0005789">
    <property type="term" value="C:endoplasmic reticulum membrane"/>
    <property type="evidence" value="ECO:0007669"/>
    <property type="project" value="UniProtKB-SubCell"/>
</dbReference>
<dbReference type="GO" id="GO:0055037">
    <property type="term" value="C:recycling endosome"/>
    <property type="evidence" value="ECO:0007669"/>
    <property type="project" value="UniProtKB-SubCell"/>
</dbReference>
<dbReference type="GO" id="GO:0030672">
    <property type="term" value="C:synaptic vesicle membrane"/>
    <property type="evidence" value="ECO:0007669"/>
    <property type="project" value="UniProtKB-SubCell"/>
</dbReference>
<dbReference type="GO" id="GO:0005509">
    <property type="term" value="F:calcium ion binding"/>
    <property type="evidence" value="ECO:0007669"/>
    <property type="project" value="Ensembl"/>
</dbReference>
<dbReference type="GO" id="GO:0030336">
    <property type="term" value="P:negative regulation of cell migration"/>
    <property type="evidence" value="ECO:0007669"/>
    <property type="project" value="Ensembl"/>
</dbReference>
<dbReference type="GO" id="GO:0045806">
    <property type="term" value="P:negative regulation of endocytosis"/>
    <property type="evidence" value="ECO:0007669"/>
    <property type="project" value="Ensembl"/>
</dbReference>
<dbReference type="GO" id="GO:1902883">
    <property type="term" value="P:negative regulation of response to oxidative stress"/>
    <property type="evidence" value="ECO:0007669"/>
    <property type="project" value="Ensembl"/>
</dbReference>
<dbReference type="CDD" id="cd04042">
    <property type="entry name" value="C2A_MCTP_PRT"/>
    <property type="match status" value="1"/>
</dbReference>
<dbReference type="CDD" id="cd08376">
    <property type="entry name" value="C2B_MCTP_PRT"/>
    <property type="match status" value="1"/>
</dbReference>
<dbReference type="CDD" id="cd08377">
    <property type="entry name" value="C2C_MCTP_PRT"/>
    <property type="match status" value="1"/>
</dbReference>
<dbReference type="FunFam" id="2.60.40.150:FF:000050">
    <property type="entry name" value="Multiple C2 and transmembrane domain containing 1"/>
    <property type="match status" value="1"/>
</dbReference>
<dbReference type="FunFam" id="2.60.40.150:FF:000068">
    <property type="entry name" value="multiple C2 and transmembrane domain-containing protein 1 isoform X2"/>
    <property type="match status" value="1"/>
</dbReference>
<dbReference type="FunFam" id="2.60.40.150:FF:000019">
    <property type="entry name" value="Multiple C2 and transmembrane domain-containing protein 2 isoform 1"/>
    <property type="match status" value="1"/>
</dbReference>
<dbReference type="Gene3D" id="2.60.40.150">
    <property type="entry name" value="C2 domain"/>
    <property type="match status" value="3"/>
</dbReference>
<dbReference type="InterPro" id="IPR000008">
    <property type="entry name" value="C2_dom"/>
</dbReference>
<dbReference type="InterPro" id="IPR035892">
    <property type="entry name" value="C2_domain_sf"/>
</dbReference>
<dbReference type="InterPro" id="IPR013583">
    <property type="entry name" value="MCTP_C"/>
</dbReference>
<dbReference type="PANTHER" id="PTHR45911">
    <property type="entry name" value="C2 DOMAIN-CONTAINING PROTEIN"/>
    <property type="match status" value="1"/>
</dbReference>
<dbReference type="PANTHER" id="PTHR45911:SF3">
    <property type="entry name" value="DYSFERLIN-RELATED"/>
    <property type="match status" value="1"/>
</dbReference>
<dbReference type="Pfam" id="PF00168">
    <property type="entry name" value="C2"/>
    <property type="match status" value="3"/>
</dbReference>
<dbReference type="Pfam" id="PF08372">
    <property type="entry name" value="PRT_C"/>
    <property type="match status" value="1"/>
</dbReference>
<dbReference type="PRINTS" id="PR00360">
    <property type="entry name" value="C2DOMAIN"/>
</dbReference>
<dbReference type="SMART" id="SM00239">
    <property type="entry name" value="C2"/>
    <property type="match status" value="3"/>
</dbReference>
<dbReference type="SUPFAM" id="SSF49562">
    <property type="entry name" value="C2 domain (Calcium/lipid-binding domain, CaLB)"/>
    <property type="match status" value="3"/>
</dbReference>
<dbReference type="PROSITE" id="PS50004">
    <property type="entry name" value="C2"/>
    <property type="match status" value="3"/>
</dbReference>
<keyword id="KW-0106">Calcium</keyword>
<keyword id="KW-0968">Cytoplasmic vesicle</keyword>
<keyword id="KW-0256">Endoplasmic reticulum</keyword>
<keyword id="KW-0967">Endosome</keyword>
<keyword id="KW-0472">Membrane</keyword>
<keyword id="KW-0479">Metal-binding</keyword>
<keyword id="KW-1185">Reference proteome</keyword>
<keyword id="KW-0677">Repeat</keyword>
<keyword id="KW-0770">Synapse</keyword>
<keyword id="KW-0812">Transmembrane</keyword>
<keyword id="KW-1133">Transmembrane helix</keyword>
<feature type="chain" id="PRO_0000441711" description="Multiple C2 and transmembrane domain-containing protein 1">
    <location>
        <begin position="1"/>
        <end position="951"/>
    </location>
</feature>
<feature type="transmembrane region" description="Helical" evidence="4">
    <location>
        <begin position="763"/>
        <end position="783"/>
    </location>
</feature>
<feature type="transmembrane region" description="Helical" evidence="4">
    <location>
        <begin position="866"/>
        <end position="886"/>
    </location>
</feature>
<feature type="domain" description="C2 1" evidence="5">
    <location>
        <begin position="240"/>
        <end position="358"/>
    </location>
</feature>
<feature type="domain" description="C2 2" evidence="5">
    <location>
        <begin position="404"/>
        <end position="521"/>
    </location>
</feature>
<feature type="domain" description="C2 3" evidence="5">
    <location>
        <begin position="555"/>
        <end position="676"/>
    </location>
</feature>
<feature type="region of interest" description="Disordered" evidence="6">
    <location>
        <begin position="29"/>
        <end position="79"/>
    </location>
</feature>
<feature type="region of interest" description="Disordered" evidence="6">
    <location>
        <begin position="92"/>
        <end position="117"/>
    </location>
</feature>
<feature type="region of interest" description="Disordered" evidence="6">
    <location>
        <begin position="129"/>
        <end position="198"/>
    </location>
</feature>
<feature type="region of interest" description="Disordered" evidence="6">
    <location>
        <begin position="210"/>
        <end position="231"/>
    </location>
</feature>
<feature type="compositionally biased region" description="Gly residues" evidence="6">
    <location>
        <begin position="31"/>
        <end position="43"/>
    </location>
</feature>
<feature type="compositionally biased region" description="Low complexity" evidence="6">
    <location>
        <begin position="147"/>
        <end position="168"/>
    </location>
</feature>
<feature type="compositionally biased region" description="Basic and acidic residues" evidence="6">
    <location>
        <begin position="174"/>
        <end position="184"/>
    </location>
</feature>
<feature type="compositionally biased region" description="Low complexity" evidence="6">
    <location>
        <begin position="219"/>
        <end position="228"/>
    </location>
</feature>
<feature type="binding site" evidence="5">
    <location>
        <position position="275"/>
    </location>
    <ligand>
        <name>Ca(2+)</name>
        <dbReference type="ChEBI" id="CHEBI:29108"/>
        <label>1</label>
    </ligand>
</feature>
<feature type="binding site" evidence="5">
    <location>
        <position position="275"/>
    </location>
    <ligand>
        <name>Ca(2+)</name>
        <dbReference type="ChEBI" id="CHEBI:29108"/>
        <label>2</label>
    </ligand>
</feature>
<feature type="binding site" evidence="5">
    <location>
        <position position="281"/>
    </location>
    <ligand>
        <name>Ca(2+)</name>
        <dbReference type="ChEBI" id="CHEBI:29108"/>
        <label>1</label>
    </ligand>
</feature>
<feature type="binding site" evidence="5">
    <location>
        <position position="328"/>
    </location>
    <ligand>
        <name>Ca(2+)</name>
        <dbReference type="ChEBI" id="CHEBI:29108"/>
        <label>1</label>
    </ligand>
</feature>
<feature type="binding site" evidence="5">
    <location>
        <position position="328"/>
    </location>
    <ligand>
        <name>Ca(2+)</name>
        <dbReference type="ChEBI" id="CHEBI:29108"/>
        <label>2</label>
    </ligand>
</feature>
<feature type="binding site" evidence="5">
    <location>
        <position position="330"/>
    </location>
    <ligand>
        <name>Ca(2+)</name>
        <dbReference type="ChEBI" id="CHEBI:29108"/>
        <label>1</label>
    </ligand>
</feature>
<feature type="binding site" evidence="5">
    <location>
        <position position="330"/>
    </location>
    <ligand>
        <name>Ca(2+)</name>
        <dbReference type="ChEBI" id="CHEBI:29108"/>
        <label>2</label>
    </ligand>
</feature>
<feature type="binding site" evidence="5">
    <location>
        <position position="336"/>
    </location>
    <ligand>
        <name>Ca(2+)</name>
        <dbReference type="ChEBI" id="CHEBI:29108"/>
        <label>2</label>
    </ligand>
</feature>
<feature type="binding site" evidence="5">
    <location>
        <position position="438"/>
    </location>
    <ligand>
        <name>Ca(2+)</name>
        <dbReference type="ChEBI" id="CHEBI:29108"/>
        <label>3</label>
    </ligand>
</feature>
<feature type="binding site" evidence="5">
    <location>
        <position position="438"/>
    </location>
    <ligand>
        <name>Ca(2+)</name>
        <dbReference type="ChEBI" id="CHEBI:29108"/>
        <label>4</label>
    </ligand>
</feature>
<feature type="binding site" evidence="5">
    <location>
        <position position="444"/>
    </location>
    <ligand>
        <name>Ca(2+)</name>
        <dbReference type="ChEBI" id="CHEBI:29108"/>
        <label>3</label>
    </ligand>
</feature>
<feature type="binding site" evidence="5">
    <location>
        <position position="491"/>
    </location>
    <ligand>
        <name>Ca(2+)</name>
        <dbReference type="ChEBI" id="CHEBI:29108"/>
        <label>3</label>
    </ligand>
</feature>
<feature type="binding site" evidence="5">
    <location>
        <position position="491"/>
    </location>
    <ligand>
        <name>Ca(2+)</name>
        <dbReference type="ChEBI" id="CHEBI:29108"/>
        <label>4</label>
    </ligand>
</feature>
<feature type="binding site" evidence="5">
    <location>
        <position position="493"/>
    </location>
    <ligand>
        <name>Ca(2+)</name>
        <dbReference type="ChEBI" id="CHEBI:29108"/>
        <label>3</label>
    </ligand>
</feature>
<feature type="binding site" evidence="5">
    <location>
        <position position="493"/>
    </location>
    <ligand>
        <name>Ca(2+)</name>
        <dbReference type="ChEBI" id="CHEBI:29108"/>
        <label>4</label>
    </ligand>
</feature>
<feature type="binding site" evidence="5">
    <location>
        <position position="499"/>
    </location>
    <ligand>
        <name>Ca(2+)</name>
        <dbReference type="ChEBI" id="CHEBI:29108"/>
        <label>4</label>
    </ligand>
</feature>
<feature type="binding site" evidence="5">
    <location>
        <position position="594"/>
    </location>
    <ligand>
        <name>Ca(2+)</name>
        <dbReference type="ChEBI" id="CHEBI:29108"/>
        <label>5</label>
    </ligand>
</feature>
<feature type="binding site" evidence="5">
    <location>
        <position position="594"/>
    </location>
    <ligand>
        <name>Ca(2+)</name>
        <dbReference type="ChEBI" id="CHEBI:29108"/>
        <label>6</label>
    </ligand>
</feature>
<feature type="binding site" evidence="5">
    <location>
        <position position="600"/>
    </location>
    <ligand>
        <name>Ca(2+)</name>
        <dbReference type="ChEBI" id="CHEBI:29108"/>
        <label>5</label>
    </ligand>
</feature>
<feature type="binding site" evidence="5">
    <location>
        <position position="646"/>
    </location>
    <ligand>
        <name>Ca(2+)</name>
        <dbReference type="ChEBI" id="CHEBI:29108"/>
        <label>5</label>
    </ligand>
</feature>
<feature type="binding site" evidence="5">
    <location>
        <position position="646"/>
    </location>
    <ligand>
        <name>Ca(2+)</name>
        <dbReference type="ChEBI" id="CHEBI:29108"/>
        <label>6</label>
    </ligand>
</feature>
<feature type="binding site" evidence="5">
    <location>
        <position position="648"/>
    </location>
    <ligand>
        <name>Ca(2+)</name>
        <dbReference type="ChEBI" id="CHEBI:29108"/>
        <label>5</label>
    </ligand>
</feature>
<feature type="binding site" evidence="5">
    <location>
        <position position="648"/>
    </location>
    <ligand>
        <name>Ca(2+)</name>
        <dbReference type="ChEBI" id="CHEBI:29108"/>
        <label>6</label>
    </ligand>
</feature>
<feature type="binding site" evidence="5">
    <location>
        <position position="654"/>
    </location>
    <ligand>
        <name>Ca(2+)</name>
        <dbReference type="ChEBI" id="CHEBI:29108"/>
        <label>6</label>
    </ligand>
</feature>
<protein>
    <recommendedName>
        <fullName evidence="7">Multiple C2 and transmembrane domain-containing protein 1</fullName>
    </recommendedName>
</protein>
<reference key="1">
    <citation type="journal article" date="2009" name="PLoS Biol.">
        <title>Lineage-specific biology revealed by a finished genome assembly of the mouse.</title>
        <authorList>
            <person name="Church D.M."/>
            <person name="Goodstadt L."/>
            <person name="Hillier L.W."/>
            <person name="Zody M.C."/>
            <person name="Goldstein S."/>
            <person name="She X."/>
            <person name="Bult C.J."/>
            <person name="Agarwala R."/>
            <person name="Cherry J.L."/>
            <person name="DiCuccio M."/>
            <person name="Hlavina W."/>
            <person name="Kapustin Y."/>
            <person name="Meric P."/>
            <person name="Maglott D."/>
            <person name="Birtle Z."/>
            <person name="Marques A.C."/>
            <person name="Graves T."/>
            <person name="Zhou S."/>
            <person name="Teague B."/>
            <person name="Potamousis K."/>
            <person name="Churas C."/>
            <person name="Place M."/>
            <person name="Herschleb J."/>
            <person name="Runnheim R."/>
            <person name="Forrest D."/>
            <person name="Amos-Landgraf J."/>
            <person name="Schwartz D.C."/>
            <person name="Cheng Z."/>
            <person name="Lindblad-Toh K."/>
            <person name="Eichler E.E."/>
            <person name="Ponting C.P."/>
        </authorList>
    </citation>
    <scope>NUCLEOTIDE SEQUENCE [LARGE SCALE GENOMIC DNA]</scope>
    <source>
        <strain>C57BL/6J</strain>
    </source>
</reference>
<reference key="2">
    <citation type="journal article" date="2010" name="Cell">
        <title>A tissue-specific atlas of mouse protein phosphorylation and expression.</title>
        <authorList>
            <person name="Huttlin E.L."/>
            <person name="Jedrychowski M.P."/>
            <person name="Elias J.E."/>
            <person name="Goswami T."/>
            <person name="Rad R."/>
            <person name="Beausoleil S.A."/>
            <person name="Villen J."/>
            <person name="Haas W."/>
            <person name="Sowa M.E."/>
            <person name="Gygi S.P."/>
        </authorList>
    </citation>
    <scope>IDENTIFICATION BY MASS SPECTROMETRY [LARGE SCALE ANALYSIS]</scope>
    <source>
        <tissue>Brain</tissue>
    </source>
</reference>
<organism>
    <name type="scientific">Mus musculus</name>
    <name type="common">Mouse</name>
    <dbReference type="NCBI Taxonomy" id="10090"/>
    <lineage>
        <taxon>Eukaryota</taxon>
        <taxon>Metazoa</taxon>
        <taxon>Chordata</taxon>
        <taxon>Craniata</taxon>
        <taxon>Vertebrata</taxon>
        <taxon>Euteleostomi</taxon>
        <taxon>Mammalia</taxon>
        <taxon>Eutheria</taxon>
        <taxon>Euarchontoglires</taxon>
        <taxon>Glires</taxon>
        <taxon>Rodentia</taxon>
        <taxon>Myomorpha</taxon>
        <taxon>Muroidea</taxon>
        <taxon>Muridae</taxon>
        <taxon>Murinae</taxon>
        <taxon>Mus</taxon>
        <taxon>Mus</taxon>
    </lineage>
</organism>
<comment type="function">
    <text evidence="1">Calcium sensor which is essential for the stabilization of normal baseline neurotransmitter release and for the induction and long-term maintenance of presynaptic homeostatic plasticity.</text>
</comment>
<comment type="cofactor">
    <cofactor evidence="5">
        <name>Ca(2+)</name>
        <dbReference type="ChEBI" id="CHEBI:29108"/>
    </cofactor>
    <text evidence="3">Binds Ca(2+) via the C2 domains in absence of phospholipids.</text>
</comment>
<comment type="subcellular location">
    <subcellularLocation>
        <location evidence="2">Cytoplasmic vesicle</location>
        <location evidence="2">Secretory vesicle</location>
        <location evidence="2">Synaptic vesicle membrane</location>
        <topology evidence="4">Multi-pass membrane protein</topology>
    </subcellularLocation>
    <subcellularLocation>
        <location evidence="2">Recycling endosome</location>
    </subcellularLocation>
    <subcellularLocation>
        <location evidence="1">Endoplasmic reticulum membrane</location>
    </subcellularLocation>
</comment>
<comment type="similarity">
    <text evidence="7">Belongs to the MCTP family.</text>
</comment>
<accession>E9PV86</accession>
<evidence type="ECO:0000250" key="1">
    <source>
        <dbReference type="UniProtKB" id="A1ZBD6"/>
    </source>
</evidence>
<evidence type="ECO:0000250" key="2">
    <source>
        <dbReference type="UniProtKB" id="D4ABL6"/>
    </source>
</evidence>
<evidence type="ECO:0000250" key="3">
    <source>
        <dbReference type="UniProtKB" id="Q6DN14"/>
    </source>
</evidence>
<evidence type="ECO:0000255" key="4"/>
<evidence type="ECO:0000255" key="5">
    <source>
        <dbReference type="PROSITE-ProRule" id="PRU00041"/>
    </source>
</evidence>
<evidence type="ECO:0000256" key="6">
    <source>
        <dbReference type="SAM" id="MobiDB-lite"/>
    </source>
</evidence>
<evidence type="ECO:0000305" key="7"/>
<evidence type="ECO:0000312" key="8">
    <source>
        <dbReference type="MGI" id="MGI:1926021"/>
    </source>
</evidence>
<sequence>MEPRAATTGELVRAASPSFQARLWKNLQLGVGKGKGGGGGRAGGPEHRTAATPTPSPPPPGTTQDALAGVGSTGSRWSGFKKRKQVLDRVFSSSQPNLCCSSPEPLEPGGAGRAEQGSTLRRRLREHLLPVAKGSSTATGTGGVTPPGGRSPDSAPSSSSASSSLSSSPQPPPRGDRVRDESTRRGGPGVHLCHQKSSSLPGTACLEQLLEPAPPPAEPARGPAEPQALQKDIERDCSQKISTVGNSNADVPLADPGMYQLDITLRRGQSLAARDRGGTSDPYVKFKIGRKEVFRSKIIHKNLNPVWEEKACVLIDHLREPLYIKVFDYDFGLQDDFMGSAFLDLTQLELNRSTDVTLTLKDPHYPDHDLGIILLSVILTPKEGEHRDVTMLMRKSWKRSSKFQTQSLRLSDQHRKSHLWRGIVSITLIEGRDLKAMDSNGLSDPYVKFRLGHQKYKSKIMPKTLNPQWREQFDFHLYEERGGIMDITAWDKDAGKRDDFIGRCQVDLSSLSREQTHKLELHLEEGEGHLVLLVTLTASATVCISDLSVNSMEDQKEREEILKRYSPLRIFNNLKDVGFLQVKVIRAEGLMAADVTGKSDPFCVVELNNDRLLTHTVYKNLNPEWNKVFTFNIKDIHSVLEVTVYDEDRDRSADFLGRVAIPLLSIQNGEQKAYVLKNKQLTGPTKGVIYLEIDVIFNAVKASLRTLIPKERKYIEEENRLSKQLLLRNFIRTKRCVIVLVNAAYYVNSCFDWDSPPRSLAAFVLFLLIVWNFELYMIPLLLLLLLTWNYFLIISGKDNRQRDTVVEDMLEDEEEEDDRDDKDGEKKGFINKIYAIQEVCVSVQNILDEVASLGERIKNTFNWTVPFLSWLAIVALCVFTAILYFIPLRYIVLVWGINKFTKKLRSPYAIDNNELLDFLSRVPSDVQVVQYQELKPDHSHSPYKRKKNNLG</sequence>
<gene>
    <name evidence="8" type="primary">Mctp1</name>
</gene>
<name>MCTP1_MOUSE</name>